<reference key="1">
    <citation type="journal article" date="2008" name="Proc. Natl. Acad. Sci. U.S.A.">
        <title>Niche adaptation and genome expansion in the chlorophyll d-producing cyanobacterium Acaryochloris marina.</title>
        <authorList>
            <person name="Swingley W.D."/>
            <person name="Chen M."/>
            <person name="Cheung P.C."/>
            <person name="Conrad A.L."/>
            <person name="Dejesa L.C."/>
            <person name="Hao J."/>
            <person name="Honchak B.M."/>
            <person name="Karbach L.E."/>
            <person name="Kurdoglu A."/>
            <person name="Lahiri S."/>
            <person name="Mastrian S.D."/>
            <person name="Miyashita H."/>
            <person name="Page L."/>
            <person name="Ramakrishna P."/>
            <person name="Satoh S."/>
            <person name="Sattley W.M."/>
            <person name="Shimada Y."/>
            <person name="Taylor H.L."/>
            <person name="Tomo T."/>
            <person name="Tsuchiya T."/>
            <person name="Wang Z.T."/>
            <person name="Raymond J."/>
            <person name="Mimuro M."/>
            <person name="Blankenship R.E."/>
            <person name="Touchman J.W."/>
        </authorList>
    </citation>
    <scope>NUCLEOTIDE SEQUENCE [LARGE SCALE GENOMIC DNA]</scope>
    <source>
        <strain>MBIC 11017</strain>
    </source>
</reference>
<protein>
    <recommendedName>
        <fullName evidence="1">Fructose-1,6-bisphosphatase class 1 2</fullName>
        <shortName evidence="1">FBPase class 1 2</shortName>
        <ecNumber evidence="1">3.1.3.11</ecNumber>
    </recommendedName>
    <alternativeName>
        <fullName evidence="1">D-fructose-1,6-bisphosphate 1-phosphohydrolase class 1 2</fullName>
    </alternativeName>
</protein>
<feature type="chain" id="PRO_0000364442" description="Fructose-1,6-bisphosphatase class 1 2">
    <location>
        <begin position="1"/>
        <end position="331"/>
    </location>
</feature>
<feature type="binding site" evidence="1">
    <location>
        <position position="91"/>
    </location>
    <ligand>
        <name>Mg(2+)</name>
        <dbReference type="ChEBI" id="CHEBI:18420"/>
        <label>1</label>
    </ligand>
</feature>
<feature type="binding site" evidence="1">
    <location>
        <position position="112"/>
    </location>
    <ligand>
        <name>Mg(2+)</name>
        <dbReference type="ChEBI" id="CHEBI:18420"/>
        <label>1</label>
    </ligand>
</feature>
<feature type="binding site" evidence="1">
    <location>
        <position position="112"/>
    </location>
    <ligand>
        <name>Mg(2+)</name>
        <dbReference type="ChEBI" id="CHEBI:18420"/>
        <label>2</label>
    </ligand>
</feature>
<feature type="binding site" evidence="1">
    <location>
        <position position="114"/>
    </location>
    <ligand>
        <name>Mg(2+)</name>
        <dbReference type="ChEBI" id="CHEBI:18420"/>
        <label>1</label>
    </ligand>
</feature>
<feature type="binding site" evidence="1">
    <location>
        <begin position="115"/>
        <end position="118"/>
    </location>
    <ligand>
        <name>substrate</name>
    </ligand>
</feature>
<feature type="binding site" evidence="1">
    <location>
        <position position="115"/>
    </location>
    <ligand>
        <name>Mg(2+)</name>
        <dbReference type="ChEBI" id="CHEBI:18420"/>
        <label>2</label>
    </ligand>
</feature>
<feature type="binding site" evidence="1">
    <location>
        <position position="207"/>
    </location>
    <ligand>
        <name>substrate</name>
    </ligand>
</feature>
<feature type="binding site" evidence="1">
    <location>
        <position position="238"/>
    </location>
    <ligand>
        <name>substrate</name>
    </ligand>
</feature>
<feature type="binding site" evidence="1">
    <location>
        <position position="268"/>
    </location>
    <ligand>
        <name>substrate</name>
    </ligand>
</feature>
<feature type="binding site" evidence="1">
    <location>
        <position position="274"/>
    </location>
    <ligand>
        <name>Mg(2+)</name>
        <dbReference type="ChEBI" id="CHEBI:18420"/>
        <label>2</label>
    </ligand>
</feature>
<comment type="catalytic activity">
    <reaction evidence="1">
        <text>beta-D-fructose 1,6-bisphosphate + H2O = beta-D-fructose 6-phosphate + phosphate</text>
        <dbReference type="Rhea" id="RHEA:11064"/>
        <dbReference type="ChEBI" id="CHEBI:15377"/>
        <dbReference type="ChEBI" id="CHEBI:32966"/>
        <dbReference type="ChEBI" id="CHEBI:43474"/>
        <dbReference type="ChEBI" id="CHEBI:57634"/>
        <dbReference type="EC" id="3.1.3.11"/>
    </reaction>
</comment>
<comment type="cofactor">
    <cofactor evidence="1">
        <name>Mg(2+)</name>
        <dbReference type="ChEBI" id="CHEBI:18420"/>
    </cofactor>
    <text evidence="1">Binds 2 magnesium ions per subunit.</text>
</comment>
<comment type="pathway">
    <text evidence="1">Carbohydrate biosynthesis; Calvin cycle.</text>
</comment>
<comment type="subunit">
    <text evidence="1">Homotetramer.</text>
</comment>
<comment type="subcellular location">
    <subcellularLocation>
        <location evidence="1">Cytoplasm</location>
    </subcellularLocation>
</comment>
<comment type="similarity">
    <text evidence="1">Belongs to the FBPase class 1 family.</text>
</comment>
<sequence>MSHPTTFNSHLWQQHRLAQQPIEISILLTQMGFAAKVLAREISRAALMGNLGLMGETNATGDAQKKLDVFSNQIVIDAFSNIGLVAVIASEELDQVKLIECGQQAQYILCTDPLDGSSNTDTGSAVGTIFGIYRRQTSGYCSTEADVLQPGTELVTAGYVLYGTSTMLVYTTGGRVDGFTLDPSLGEFLLSHENIRCPETGKTYSANLSYYQEWHPHIQNFADYLSDRKSHTAHTLRYSGALVADVHRCLLEGGLYFYPPTADQPEGKLRLLYECAPLAFLVEQAGGKATSGLARIMDLEVTSIHQRSPLVIGSQVAVNLYQTFLEQGKAA</sequence>
<name>F16A2_ACAM1</name>
<evidence type="ECO:0000255" key="1">
    <source>
        <dbReference type="HAMAP-Rule" id="MF_01855"/>
    </source>
</evidence>
<gene>
    <name evidence="1" type="primary">fbp2</name>
    <name type="ordered locus">AM1_6321</name>
</gene>
<accession>B0C7G7</accession>
<dbReference type="EC" id="3.1.3.11" evidence="1"/>
<dbReference type="EMBL" id="CP000828">
    <property type="protein sequence ID" value="ABW31251.1"/>
    <property type="molecule type" value="Genomic_DNA"/>
</dbReference>
<dbReference type="SMR" id="B0C7G7"/>
<dbReference type="STRING" id="329726.AM1_6321"/>
<dbReference type="KEGG" id="amr:AM1_6321"/>
<dbReference type="eggNOG" id="COG0158">
    <property type="taxonomic scope" value="Bacteria"/>
</dbReference>
<dbReference type="HOGENOM" id="CLU_039977_2_2_3"/>
<dbReference type="OrthoDB" id="569410at2"/>
<dbReference type="UniPathway" id="UPA00116"/>
<dbReference type="Proteomes" id="UP000000268">
    <property type="component" value="Chromosome"/>
</dbReference>
<dbReference type="GO" id="GO:0005829">
    <property type="term" value="C:cytosol"/>
    <property type="evidence" value="ECO:0007669"/>
    <property type="project" value="TreeGrafter"/>
</dbReference>
<dbReference type="GO" id="GO:0042132">
    <property type="term" value="F:fructose 1,6-bisphosphate 1-phosphatase activity"/>
    <property type="evidence" value="ECO:0007669"/>
    <property type="project" value="UniProtKB-UniRule"/>
</dbReference>
<dbReference type="GO" id="GO:0000287">
    <property type="term" value="F:magnesium ion binding"/>
    <property type="evidence" value="ECO:0007669"/>
    <property type="project" value="UniProtKB-UniRule"/>
</dbReference>
<dbReference type="GO" id="GO:0030388">
    <property type="term" value="P:fructose 1,6-bisphosphate metabolic process"/>
    <property type="evidence" value="ECO:0007669"/>
    <property type="project" value="TreeGrafter"/>
</dbReference>
<dbReference type="GO" id="GO:0006002">
    <property type="term" value="P:fructose 6-phosphate metabolic process"/>
    <property type="evidence" value="ECO:0007669"/>
    <property type="project" value="TreeGrafter"/>
</dbReference>
<dbReference type="GO" id="GO:0006000">
    <property type="term" value="P:fructose metabolic process"/>
    <property type="evidence" value="ECO:0007669"/>
    <property type="project" value="TreeGrafter"/>
</dbReference>
<dbReference type="GO" id="GO:0006094">
    <property type="term" value="P:gluconeogenesis"/>
    <property type="evidence" value="ECO:0007669"/>
    <property type="project" value="UniProtKB-UniRule"/>
</dbReference>
<dbReference type="GO" id="GO:0019253">
    <property type="term" value="P:reductive pentose-phosphate cycle"/>
    <property type="evidence" value="ECO:0007669"/>
    <property type="project" value="UniProtKB-UniRule"/>
</dbReference>
<dbReference type="GO" id="GO:0005986">
    <property type="term" value="P:sucrose biosynthetic process"/>
    <property type="evidence" value="ECO:0007669"/>
    <property type="project" value="TreeGrafter"/>
</dbReference>
<dbReference type="CDD" id="cd00354">
    <property type="entry name" value="FBPase"/>
    <property type="match status" value="1"/>
</dbReference>
<dbReference type="FunFam" id="3.30.540.10:FF:000002">
    <property type="entry name" value="Fructose-1,6-bisphosphatase class 1"/>
    <property type="match status" value="1"/>
</dbReference>
<dbReference type="Gene3D" id="3.40.190.80">
    <property type="match status" value="1"/>
</dbReference>
<dbReference type="Gene3D" id="3.30.540.10">
    <property type="entry name" value="Fructose-1,6-Bisphosphatase, subunit A, domain 1"/>
    <property type="match status" value="1"/>
</dbReference>
<dbReference type="HAMAP" id="MF_01855">
    <property type="entry name" value="FBPase_class1"/>
    <property type="match status" value="1"/>
</dbReference>
<dbReference type="InterPro" id="IPR044015">
    <property type="entry name" value="FBPase_C_dom"/>
</dbReference>
<dbReference type="InterPro" id="IPR000146">
    <property type="entry name" value="FBPase_class-1"/>
</dbReference>
<dbReference type="InterPro" id="IPR033391">
    <property type="entry name" value="FBPase_N"/>
</dbReference>
<dbReference type="InterPro" id="IPR028343">
    <property type="entry name" value="FBPtase"/>
</dbReference>
<dbReference type="InterPro" id="IPR020548">
    <property type="entry name" value="Fructose_bisphosphatase_AS"/>
</dbReference>
<dbReference type="NCBIfam" id="NF006778">
    <property type="entry name" value="PRK09293.1-1"/>
    <property type="match status" value="1"/>
</dbReference>
<dbReference type="PANTHER" id="PTHR11556">
    <property type="entry name" value="FRUCTOSE-1,6-BISPHOSPHATASE-RELATED"/>
    <property type="match status" value="1"/>
</dbReference>
<dbReference type="PANTHER" id="PTHR11556:SF35">
    <property type="entry name" value="SEDOHEPTULOSE-1,7-BISPHOSPHATASE, CHLOROPLASTIC"/>
    <property type="match status" value="1"/>
</dbReference>
<dbReference type="Pfam" id="PF00316">
    <property type="entry name" value="FBPase"/>
    <property type="match status" value="1"/>
</dbReference>
<dbReference type="Pfam" id="PF18913">
    <property type="entry name" value="FBPase_C"/>
    <property type="match status" value="1"/>
</dbReference>
<dbReference type="PIRSF" id="PIRSF500210">
    <property type="entry name" value="FBPtase"/>
    <property type="match status" value="1"/>
</dbReference>
<dbReference type="PIRSF" id="PIRSF000904">
    <property type="entry name" value="FBPtase_SBPase"/>
    <property type="match status" value="1"/>
</dbReference>
<dbReference type="PRINTS" id="PR00115">
    <property type="entry name" value="F16BPHPHTASE"/>
</dbReference>
<dbReference type="SUPFAM" id="SSF56655">
    <property type="entry name" value="Carbohydrate phosphatase"/>
    <property type="match status" value="1"/>
</dbReference>
<dbReference type="PROSITE" id="PS00124">
    <property type="entry name" value="FBPASE"/>
    <property type="match status" value="1"/>
</dbReference>
<proteinExistence type="inferred from homology"/>
<keyword id="KW-0113">Calvin cycle</keyword>
<keyword id="KW-0119">Carbohydrate metabolism</keyword>
<keyword id="KW-0963">Cytoplasm</keyword>
<keyword id="KW-0378">Hydrolase</keyword>
<keyword id="KW-0460">Magnesium</keyword>
<keyword id="KW-0479">Metal-binding</keyword>
<keyword id="KW-1185">Reference proteome</keyword>
<organism>
    <name type="scientific">Acaryochloris marina (strain MBIC 11017)</name>
    <dbReference type="NCBI Taxonomy" id="329726"/>
    <lineage>
        <taxon>Bacteria</taxon>
        <taxon>Bacillati</taxon>
        <taxon>Cyanobacteriota</taxon>
        <taxon>Cyanophyceae</taxon>
        <taxon>Acaryochloridales</taxon>
        <taxon>Acaryochloridaceae</taxon>
        <taxon>Acaryochloris</taxon>
    </lineage>
</organism>